<organism>
    <name type="scientific">Meyerozyma guilliermondii (strain ATCC 6260 / CBS 566 / DSM 6381 / JCM 1539 / NBRC 10279 / NRRL Y-324)</name>
    <name type="common">Yeast</name>
    <name type="synonym">Candida guilliermondii</name>
    <dbReference type="NCBI Taxonomy" id="294746"/>
    <lineage>
        <taxon>Eukaryota</taxon>
        <taxon>Fungi</taxon>
        <taxon>Dikarya</taxon>
        <taxon>Ascomycota</taxon>
        <taxon>Saccharomycotina</taxon>
        <taxon>Pichiomycetes</taxon>
        <taxon>Debaryomycetaceae</taxon>
        <taxon>Meyerozyma</taxon>
    </lineage>
</organism>
<protein>
    <recommendedName>
        <fullName>Histone chaperone RTT106</fullName>
    </recommendedName>
</protein>
<accession>A5DEE9</accession>
<feature type="chain" id="PRO_0000320499" description="Histone chaperone RTT106">
    <location>
        <begin position="1"/>
        <end position="443"/>
    </location>
</feature>
<feature type="region of interest" description="Disordered" evidence="2">
    <location>
        <begin position="38"/>
        <end position="64"/>
    </location>
</feature>
<feature type="region of interest" description="Disordered" evidence="2">
    <location>
        <begin position="358"/>
        <end position="443"/>
    </location>
</feature>
<feature type="compositionally biased region" description="Basic and acidic residues" evidence="2">
    <location>
        <begin position="358"/>
        <end position="372"/>
    </location>
</feature>
<feature type="compositionally biased region" description="Acidic residues" evidence="2">
    <location>
        <begin position="373"/>
        <end position="389"/>
    </location>
</feature>
<feature type="compositionally biased region" description="Acidic residues" evidence="2">
    <location>
        <begin position="407"/>
        <end position="443"/>
    </location>
</feature>
<gene>
    <name type="primary">RTT106</name>
    <name type="ORF">PGUG_01650</name>
</gene>
<sequence length="443" mass="48665">MQWLHTLPPPLQDEVAALISAVPQAAPTLDKLFEYASNSPQKQKIPDPPRKKRQQTSAPPQLPPPLTQADIIFHLSNISCQSPFRKRLGFAFHLALGPQGPVPALSLVNNQLQPEFSLMNLGQDIVFCSLLPILGNSTVSSKKDTVLLLVWLAHGDPIVCQLNFDAVKKQLVAEGKVPASAESELDSESEEDDAEGIRPINEALVDFLVRQFQLCGIRLLNYLPFSTGSKNKLTLNKDTALALSTNGTSVNDVVIVQAYRGSKDGALVLLGGTQDQPGTIIFGFRKPILLFRANSVKRISYSNITRLTFNVSVTVHNDTRPDGEETIEFSMLDQAYFQILDDFVKRQGINDDSFNEALREKQKADPNVKAETDAEDAEAPDSDDEEEDGTYQAGVESDSDNEKKEEDGEENSEDEDSEDGEESEDSEDGELSEDGESDDLSLS</sequence>
<reference key="1">
    <citation type="journal article" date="2009" name="Nature">
        <title>Evolution of pathogenicity and sexual reproduction in eight Candida genomes.</title>
        <authorList>
            <person name="Butler G."/>
            <person name="Rasmussen M.D."/>
            <person name="Lin M.F."/>
            <person name="Santos M.A.S."/>
            <person name="Sakthikumar S."/>
            <person name="Munro C.A."/>
            <person name="Rheinbay E."/>
            <person name="Grabherr M."/>
            <person name="Forche A."/>
            <person name="Reedy J.L."/>
            <person name="Agrafioti I."/>
            <person name="Arnaud M.B."/>
            <person name="Bates S."/>
            <person name="Brown A.J.P."/>
            <person name="Brunke S."/>
            <person name="Costanzo M.C."/>
            <person name="Fitzpatrick D.A."/>
            <person name="de Groot P.W.J."/>
            <person name="Harris D."/>
            <person name="Hoyer L.L."/>
            <person name="Hube B."/>
            <person name="Klis F.M."/>
            <person name="Kodira C."/>
            <person name="Lennard N."/>
            <person name="Logue M.E."/>
            <person name="Martin R."/>
            <person name="Neiman A.M."/>
            <person name="Nikolaou E."/>
            <person name="Quail M.A."/>
            <person name="Quinn J."/>
            <person name="Santos M.C."/>
            <person name="Schmitzberger F.F."/>
            <person name="Sherlock G."/>
            <person name="Shah P."/>
            <person name="Silverstein K.A.T."/>
            <person name="Skrzypek M.S."/>
            <person name="Soll D."/>
            <person name="Staggs R."/>
            <person name="Stansfield I."/>
            <person name="Stumpf M.P.H."/>
            <person name="Sudbery P.E."/>
            <person name="Srikantha T."/>
            <person name="Zeng Q."/>
            <person name="Berman J."/>
            <person name="Berriman M."/>
            <person name="Heitman J."/>
            <person name="Gow N.A.R."/>
            <person name="Lorenz M.C."/>
            <person name="Birren B.W."/>
            <person name="Kellis M."/>
            <person name="Cuomo C.A."/>
        </authorList>
    </citation>
    <scope>NUCLEOTIDE SEQUENCE [LARGE SCALE GENOMIC DNA]</scope>
    <source>
        <strain>ATCC 6260 / CBS 566 / DSM 6381 / JCM 1539 / NBRC 10279 / NRRL Y-324</strain>
    </source>
</reference>
<proteinExistence type="inferred from homology"/>
<name>RT106_PICGU</name>
<evidence type="ECO:0000250" key="1"/>
<evidence type="ECO:0000256" key="2">
    <source>
        <dbReference type="SAM" id="MobiDB-lite"/>
    </source>
</evidence>
<evidence type="ECO:0000305" key="3"/>
<dbReference type="EMBL" id="CH408156">
    <property type="protein sequence ID" value="EDK37552.2"/>
    <property type="molecule type" value="Genomic_DNA"/>
</dbReference>
<dbReference type="RefSeq" id="XP_001485979.1">
    <property type="nucleotide sequence ID" value="XM_001485929.1"/>
</dbReference>
<dbReference type="SMR" id="A5DEE9"/>
<dbReference type="FunCoup" id="A5DEE9">
    <property type="interactions" value="142"/>
</dbReference>
<dbReference type="STRING" id="294746.A5DEE9"/>
<dbReference type="GeneID" id="5127799"/>
<dbReference type="KEGG" id="pgu:PGUG_01650"/>
<dbReference type="VEuPathDB" id="FungiDB:PGUG_01650"/>
<dbReference type="eggNOG" id="ENOG502R9PE">
    <property type="taxonomic scope" value="Eukaryota"/>
</dbReference>
<dbReference type="HOGENOM" id="CLU_040939_0_0_1"/>
<dbReference type="InParanoid" id="A5DEE9"/>
<dbReference type="OMA" id="TRLTFNV"/>
<dbReference type="OrthoDB" id="75754at2759"/>
<dbReference type="Proteomes" id="UP000001997">
    <property type="component" value="Unassembled WGS sequence"/>
</dbReference>
<dbReference type="GO" id="GO:0005694">
    <property type="term" value="C:chromosome"/>
    <property type="evidence" value="ECO:0007669"/>
    <property type="project" value="UniProtKB-SubCell"/>
</dbReference>
<dbReference type="GO" id="GO:0005634">
    <property type="term" value="C:nucleus"/>
    <property type="evidence" value="ECO:0007669"/>
    <property type="project" value="UniProtKB-SubCell"/>
</dbReference>
<dbReference type="GO" id="GO:0003677">
    <property type="term" value="F:DNA binding"/>
    <property type="evidence" value="ECO:0007669"/>
    <property type="project" value="UniProtKB-KW"/>
</dbReference>
<dbReference type="GO" id="GO:0042393">
    <property type="term" value="F:histone binding"/>
    <property type="evidence" value="ECO:0007669"/>
    <property type="project" value="TreeGrafter"/>
</dbReference>
<dbReference type="GO" id="GO:0031491">
    <property type="term" value="F:nucleosome binding"/>
    <property type="evidence" value="ECO:0007669"/>
    <property type="project" value="TreeGrafter"/>
</dbReference>
<dbReference type="CDD" id="cd13304">
    <property type="entry name" value="PH2-like_Rtt106"/>
    <property type="match status" value="1"/>
</dbReference>
<dbReference type="Gene3D" id="2.30.29.120">
    <property type="match status" value="1"/>
</dbReference>
<dbReference type="Gene3D" id="2.30.29.30">
    <property type="entry name" value="Pleckstrin-homology domain (PH domain)/Phosphotyrosine-binding domain (PTB)"/>
    <property type="match status" value="1"/>
</dbReference>
<dbReference type="InterPro" id="IPR011993">
    <property type="entry name" value="PH-like_dom_sf"/>
</dbReference>
<dbReference type="InterPro" id="IPR013719">
    <property type="entry name" value="RTT106/SPT16-like_middle_dom"/>
</dbReference>
<dbReference type="InterPro" id="IPR050454">
    <property type="entry name" value="RTT106/SSRP1_HistChap/FACT"/>
</dbReference>
<dbReference type="InterPro" id="IPR040770">
    <property type="entry name" value="Rtt106_PH"/>
</dbReference>
<dbReference type="PANTHER" id="PTHR45849">
    <property type="entry name" value="FACT COMPLEX SUBUNIT SSRP1"/>
    <property type="match status" value="1"/>
</dbReference>
<dbReference type="PANTHER" id="PTHR45849:SF3">
    <property type="entry name" value="HISTONE CHAPERONE RTT106"/>
    <property type="match status" value="1"/>
</dbReference>
<dbReference type="Pfam" id="PF18469">
    <property type="entry name" value="PH_18"/>
    <property type="match status" value="1"/>
</dbReference>
<dbReference type="Pfam" id="PF08512">
    <property type="entry name" value="Rttp106-like_middle"/>
    <property type="match status" value="1"/>
</dbReference>
<dbReference type="SMART" id="SM01287">
    <property type="entry name" value="Rtt106"/>
    <property type="match status" value="1"/>
</dbReference>
<dbReference type="SUPFAM" id="SSF50729">
    <property type="entry name" value="PH domain-like"/>
    <property type="match status" value="1"/>
</dbReference>
<comment type="function">
    <text evidence="1">Histones H3 and H4 chaperone involved in the nucleosome formation and heterochromatin silencing. Required for the deposition of H3K56ac-carrying H3-H4 complex onto newly-replicated DNA. Plays a role in the transcriptional regulation of the cell-cycle dependent histone genes by creating a repressive structure at the core histone gene promoter (By similarity).</text>
</comment>
<comment type="subunit">
    <text evidence="1">Interacts with histones H3 and H4.</text>
</comment>
<comment type="subcellular location">
    <subcellularLocation>
        <location evidence="1">Nucleus</location>
    </subcellularLocation>
    <subcellularLocation>
        <location evidence="1">Chromosome</location>
    </subcellularLocation>
</comment>
<comment type="similarity">
    <text evidence="3">Belongs to the RTT106 family.</text>
</comment>
<keyword id="KW-0143">Chaperone</keyword>
<keyword id="KW-0158">Chromosome</keyword>
<keyword id="KW-0238">DNA-binding</keyword>
<keyword id="KW-0539">Nucleus</keyword>
<keyword id="KW-1185">Reference proteome</keyword>
<keyword id="KW-0804">Transcription</keyword>
<keyword id="KW-0805">Transcription regulation</keyword>